<evidence type="ECO:0000255" key="1">
    <source>
        <dbReference type="HAMAP-Rule" id="MF_01023"/>
    </source>
</evidence>
<feature type="chain" id="PRO_1000135380" description="Histidinol-phosphate aminotransferase">
    <location>
        <begin position="1"/>
        <end position="361"/>
    </location>
</feature>
<feature type="modified residue" description="N6-(pyridoxal phosphate)lysine" evidence="1">
    <location>
        <position position="219"/>
    </location>
</feature>
<proteinExistence type="inferred from homology"/>
<name>HIS8_ACIBT</name>
<accession>A3M2I8</accession>
<organism>
    <name type="scientific">Acinetobacter baumannii (strain ATCC 17978 / DSM 105126 / CIP 53.77 / LMG 1025 / NCDC KC755 / 5377)</name>
    <dbReference type="NCBI Taxonomy" id="400667"/>
    <lineage>
        <taxon>Bacteria</taxon>
        <taxon>Pseudomonadati</taxon>
        <taxon>Pseudomonadota</taxon>
        <taxon>Gammaproteobacteria</taxon>
        <taxon>Moraxellales</taxon>
        <taxon>Moraxellaceae</taxon>
        <taxon>Acinetobacter</taxon>
        <taxon>Acinetobacter calcoaceticus/baumannii complex</taxon>
    </lineage>
</organism>
<comment type="catalytic activity">
    <reaction evidence="1">
        <text>L-histidinol phosphate + 2-oxoglutarate = 3-(imidazol-4-yl)-2-oxopropyl phosphate + L-glutamate</text>
        <dbReference type="Rhea" id="RHEA:23744"/>
        <dbReference type="ChEBI" id="CHEBI:16810"/>
        <dbReference type="ChEBI" id="CHEBI:29985"/>
        <dbReference type="ChEBI" id="CHEBI:57766"/>
        <dbReference type="ChEBI" id="CHEBI:57980"/>
        <dbReference type="EC" id="2.6.1.9"/>
    </reaction>
</comment>
<comment type="cofactor">
    <cofactor evidence="1">
        <name>pyridoxal 5'-phosphate</name>
        <dbReference type="ChEBI" id="CHEBI:597326"/>
    </cofactor>
</comment>
<comment type="pathway">
    <text evidence="1">Amino-acid biosynthesis; L-histidine biosynthesis; L-histidine from 5-phospho-alpha-D-ribose 1-diphosphate: step 7/9.</text>
</comment>
<comment type="subunit">
    <text evidence="1">Homodimer.</text>
</comment>
<comment type="similarity">
    <text evidence="1">Belongs to the class-II pyridoxal-phosphate-dependent aminotransferase family. Histidinol-phosphate aminotransferase subfamily.</text>
</comment>
<sequence>MTVSTAQMRFWSPEVRELEPYVPGEQPKIQNLLKLNTNENPYPPSPKVVEAVQAVLHEQADVLRLYPDPDATALKQAIAKQQNIDVSQVFVGNGSDEVLAHIFKAFFLQDEPILYPDITYSFYPVYSQFFGTKTKEIPLNENFEIDVRDYTQPNGGVIITNPNAPTSIALSLAEIEQVLQANPDRVVVIDEAYVDFGAESAVSLINRYENLVVCQTTSKSRSLAGLRVGFAIAQSHLIAALETVKNSFNSYPIDRFAIAAAVASFEDQVYFEEQCQKVITSREKLVRDLTVLGFNVLPSKANFIFATHSQHDAGQLAQKLREQGIIVRYFNKPRINQFLRITVGTDEQNARLVQTLKQDIL</sequence>
<protein>
    <recommendedName>
        <fullName evidence="1">Histidinol-phosphate aminotransferase</fullName>
        <ecNumber evidence="1">2.6.1.9</ecNumber>
    </recommendedName>
    <alternativeName>
        <fullName evidence="1">Imidazole acetol-phosphate transaminase</fullName>
    </alternativeName>
</protein>
<gene>
    <name evidence="1" type="primary">hisC</name>
    <name type="ordered locus">A1S_0688</name>
</gene>
<dbReference type="EC" id="2.6.1.9" evidence="1"/>
<dbReference type="EMBL" id="CP000521">
    <property type="protein sequence ID" value="ABO11132.2"/>
    <property type="molecule type" value="Genomic_DNA"/>
</dbReference>
<dbReference type="RefSeq" id="WP_000218885.1">
    <property type="nucleotide sequence ID" value="NZ_CACVBA010000001.1"/>
</dbReference>
<dbReference type="SMR" id="A3M2I8"/>
<dbReference type="KEGG" id="acb:A1S_0688"/>
<dbReference type="HOGENOM" id="CLU_017584_3_0_6"/>
<dbReference type="UniPathway" id="UPA00031">
    <property type="reaction ID" value="UER00012"/>
</dbReference>
<dbReference type="GO" id="GO:0004400">
    <property type="term" value="F:histidinol-phosphate transaminase activity"/>
    <property type="evidence" value="ECO:0007669"/>
    <property type="project" value="UniProtKB-UniRule"/>
</dbReference>
<dbReference type="GO" id="GO:0030170">
    <property type="term" value="F:pyridoxal phosphate binding"/>
    <property type="evidence" value="ECO:0007669"/>
    <property type="project" value="InterPro"/>
</dbReference>
<dbReference type="GO" id="GO:0000105">
    <property type="term" value="P:L-histidine biosynthetic process"/>
    <property type="evidence" value="ECO:0007669"/>
    <property type="project" value="UniProtKB-UniRule"/>
</dbReference>
<dbReference type="CDD" id="cd00609">
    <property type="entry name" value="AAT_like"/>
    <property type="match status" value="1"/>
</dbReference>
<dbReference type="Gene3D" id="3.90.1150.10">
    <property type="entry name" value="Aspartate Aminotransferase, domain 1"/>
    <property type="match status" value="1"/>
</dbReference>
<dbReference type="Gene3D" id="3.40.640.10">
    <property type="entry name" value="Type I PLP-dependent aspartate aminotransferase-like (Major domain)"/>
    <property type="match status" value="1"/>
</dbReference>
<dbReference type="HAMAP" id="MF_01023">
    <property type="entry name" value="HisC_aminotrans_2"/>
    <property type="match status" value="1"/>
</dbReference>
<dbReference type="InterPro" id="IPR004839">
    <property type="entry name" value="Aminotransferase_I/II_large"/>
</dbReference>
<dbReference type="InterPro" id="IPR005861">
    <property type="entry name" value="HisP_aminotrans"/>
</dbReference>
<dbReference type="InterPro" id="IPR050106">
    <property type="entry name" value="HistidinolP_aminotransfase"/>
</dbReference>
<dbReference type="InterPro" id="IPR015424">
    <property type="entry name" value="PyrdxlP-dep_Trfase"/>
</dbReference>
<dbReference type="InterPro" id="IPR015421">
    <property type="entry name" value="PyrdxlP-dep_Trfase_major"/>
</dbReference>
<dbReference type="InterPro" id="IPR015422">
    <property type="entry name" value="PyrdxlP-dep_Trfase_small"/>
</dbReference>
<dbReference type="NCBIfam" id="TIGR01141">
    <property type="entry name" value="hisC"/>
    <property type="match status" value="1"/>
</dbReference>
<dbReference type="PANTHER" id="PTHR43643:SF3">
    <property type="entry name" value="HISTIDINOL-PHOSPHATE AMINOTRANSFERASE"/>
    <property type="match status" value="1"/>
</dbReference>
<dbReference type="PANTHER" id="PTHR43643">
    <property type="entry name" value="HISTIDINOL-PHOSPHATE AMINOTRANSFERASE 2"/>
    <property type="match status" value="1"/>
</dbReference>
<dbReference type="Pfam" id="PF00155">
    <property type="entry name" value="Aminotran_1_2"/>
    <property type="match status" value="1"/>
</dbReference>
<dbReference type="SUPFAM" id="SSF53383">
    <property type="entry name" value="PLP-dependent transferases"/>
    <property type="match status" value="1"/>
</dbReference>
<keyword id="KW-0028">Amino-acid biosynthesis</keyword>
<keyword id="KW-0032">Aminotransferase</keyword>
<keyword id="KW-0368">Histidine biosynthesis</keyword>
<keyword id="KW-0663">Pyridoxal phosphate</keyword>
<keyword id="KW-0808">Transferase</keyword>
<reference key="1">
    <citation type="journal article" date="2007" name="Genes Dev.">
        <title>New insights into Acinetobacter baumannii pathogenesis revealed by high-density pyrosequencing and transposon mutagenesis.</title>
        <authorList>
            <person name="Smith M.G."/>
            <person name="Gianoulis T.A."/>
            <person name="Pukatzki S."/>
            <person name="Mekalanos J.J."/>
            <person name="Ornston L.N."/>
            <person name="Gerstein M."/>
            <person name="Snyder M."/>
        </authorList>
    </citation>
    <scope>NUCLEOTIDE SEQUENCE [LARGE SCALE GENOMIC DNA]</scope>
    <source>
        <strain>ATCC 17978 / DSM 105126 / CIP 53.77 / LMG 1025 / NCDC KC755 / 5377</strain>
    </source>
</reference>